<protein>
    <recommendedName>
        <fullName evidence="1">Small ribosomal subunit protein uS4</fullName>
    </recommendedName>
    <alternativeName>
        <fullName evidence="3">30S ribosomal protein S4</fullName>
    </alternativeName>
</protein>
<feature type="chain" id="PRO_1000085962" description="Small ribosomal subunit protein uS4">
    <location>
        <begin position="1"/>
        <end position="205"/>
    </location>
</feature>
<feature type="domain" description="S4 RNA-binding" evidence="1">
    <location>
        <begin position="94"/>
        <end position="157"/>
    </location>
</feature>
<feature type="region of interest" description="Disordered" evidence="2">
    <location>
        <begin position="19"/>
        <end position="45"/>
    </location>
</feature>
<proteinExistence type="inferred from homology"/>
<gene>
    <name evidence="1" type="primary">rpsD</name>
    <name type="ordered locus">BSUIS_A0868</name>
</gene>
<dbReference type="EMBL" id="CP000911">
    <property type="protein sequence ID" value="ABY37936.1"/>
    <property type="molecule type" value="Genomic_DNA"/>
</dbReference>
<dbReference type="RefSeq" id="WP_002967582.1">
    <property type="nucleotide sequence ID" value="NC_010169.1"/>
</dbReference>
<dbReference type="SMR" id="B0CLF6"/>
<dbReference type="GeneID" id="97533867"/>
<dbReference type="KEGG" id="bmt:BSUIS_A0868"/>
<dbReference type="HOGENOM" id="CLU_092403_0_0_5"/>
<dbReference type="Proteomes" id="UP000008545">
    <property type="component" value="Chromosome I"/>
</dbReference>
<dbReference type="GO" id="GO:0015935">
    <property type="term" value="C:small ribosomal subunit"/>
    <property type="evidence" value="ECO:0007669"/>
    <property type="project" value="InterPro"/>
</dbReference>
<dbReference type="GO" id="GO:0019843">
    <property type="term" value="F:rRNA binding"/>
    <property type="evidence" value="ECO:0007669"/>
    <property type="project" value="UniProtKB-UniRule"/>
</dbReference>
<dbReference type="GO" id="GO:0003735">
    <property type="term" value="F:structural constituent of ribosome"/>
    <property type="evidence" value="ECO:0007669"/>
    <property type="project" value="InterPro"/>
</dbReference>
<dbReference type="GO" id="GO:0042274">
    <property type="term" value="P:ribosomal small subunit biogenesis"/>
    <property type="evidence" value="ECO:0007669"/>
    <property type="project" value="TreeGrafter"/>
</dbReference>
<dbReference type="GO" id="GO:0006412">
    <property type="term" value="P:translation"/>
    <property type="evidence" value="ECO:0007669"/>
    <property type="project" value="UniProtKB-UniRule"/>
</dbReference>
<dbReference type="CDD" id="cd00165">
    <property type="entry name" value="S4"/>
    <property type="match status" value="1"/>
</dbReference>
<dbReference type="FunFam" id="3.10.290.10:FF:000001">
    <property type="entry name" value="30S ribosomal protein S4"/>
    <property type="match status" value="1"/>
</dbReference>
<dbReference type="Gene3D" id="1.10.1050.10">
    <property type="entry name" value="Ribosomal Protein S4 Delta 41, Chain A, domain 1"/>
    <property type="match status" value="1"/>
</dbReference>
<dbReference type="Gene3D" id="3.10.290.10">
    <property type="entry name" value="RNA-binding S4 domain"/>
    <property type="match status" value="1"/>
</dbReference>
<dbReference type="HAMAP" id="MF_01306_B">
    <property type="entry name" value="Ribosomal_uS4_B"/>
    <property type="match status" value="1"/>
</dbReference>
<dbReference type="InterPro" id="IPR022801">
    <property type="entry name" value="Ribosomal_uS4"/>
</dbReference>
<dbReference type="InterPro" id="IPR005709">
    <property type="entry name" value="Ribosomal_uS4_bac-type"/>
</dbReference>
<dbReference type="InterPro" id="IPR018079">
    <property type="entry name" value="Ribosomal_uS4_CS"/>
</dbReference>
<dbReference type="InterPro" id="IPR001912">
    <property type="entry name" value="Ribosomal_uS4_N"/>
</dbReference>
<dbReference type="InterPro" id="IPR002942">
    <property type="entry name" value="S4_RNA-bd"/>
</dbReference>
<dbReference type="InterPro" id="IPR036986">
    <property type="entry name" value="S4_RNA-bd_sf"/>
</dbReference>
<dbReference type="NCBIfam" id="NF003717">
    <property type="entry name" value="PRK05327.1"/>
    <property type="match status" value="1"/>
</dbReference>
<dbReference type="NCBIfam" id="TIGR01017">
    <property type="entry name" value="rpsD_bact"/>
    <property type="match status" value="1"/>
</dbReference>
<dbReference type="PANTHER" id="PTHR11831">
    <property type="entry name" value="30S 40S RIBOSOMAL PROTEIN"/>
    <property type="match status" value="1"/>
</dbReference>
<dbReference type="PANTHER" id="PTHR11831:SF4">
    <property type="entry name" value="SMALL RIBOSOMAL SUBUNIT PROTEIN US4M"/>
    <property type="match status" value="1"/>
</dbReference>
<dbReference type="Pfam" id="PF00163">
    <property type="entry name" value="Ribosomal_S4"/>
    <property type="match status" value="1"/>
</dbReference>
<dbReference type="Pfam" id="PF01479">
    <property type="entry name" value="S4"/>
    <property type="match status" value="1"/>
</dbReference>
<dbReference type="SMART" id="SM01390">
    <property type="entry name" value="Ribosomal_S4"/>
    <property type="match status" value="1"/>
</dbReference>
<dbReference type="SMART" id="SM00363">
    <property type="entry name" value="S4"/>
    <property type="match status" value="1"/>
</dbReference>
<dbReference type="SUPFAM" id="SSF55174">
    <property type="entry name" value="Alpha-L RNA-binding motif"/>
    <property type="match status" value="1"/>
</dbReference>
<dbReference type="PROSITE" id="PS00632">
    <property type="entry name" value="RIBOSOMAL_S4"/>
    <property type="match status" value="1"/>
</dbReference>
<dbReference type="PROSITE" id="PS50889">
    <property type="entry name" value="S4"/>
    <property type="match status" value="1"/>
</dbReference>
<comment type="function">
    <text evidence="1">One of the primary rRNA binding proteins, it binds directly to 16S rRNA where it nucleates assembly of the body of the 30S subunit.</text>
</comment>
<comment type="function">
    <text evidence="1">With S5 and S12 plays an important role in translational accuracy.</text>
</comment>
<comment type="subunit">
    <text evidence="1">Part of the 30S ribosomal subunit. Contacts protein S5. The interaction surface between S4 and S5 is involved in control of translational fidelity.</text>
</comment>
<comment type="similarity">
    <text evidence="1">Belongs to the universal ribosomal protein uS4 family.</text>
</comment>
<reference key="1">
    <citation type="submission" date="2007-12" db="EMBL/GenBank/DDBJ databases">
        <title>Brucella suis ATCC 23445 whole genome shotgun sequencing project.</title>
        <authorList>
            <person name="Setubal J.C."/>
            <person name="Bowns C."/>
            <person name="Boyle S."/>
            <person name="Crasta O.R."/>
            <person name="Czar M.J."/>
            <person name="Dharmanolla C."/>
            <person name="Gillespie J.J."/>
            <person name="Kenyon R.W."/>
            <person name="Lu J."/>
            <person name="Mane S."/>
            <person name="Mohapatra S."/>
            <person name="Nagrani S."/>
            <person name="Purkayastha A."/>
            <person name="Rajasimha H.K."/>
            <person name="Shallom J.M."/>
            <person name="Shallom S."/>
            <person name="Shukla M."/>
            <person name="Snyder E.E."/>
            <person name="Sobral B.W."/>
            <person name="Wattam A.R."/>
            <person name="Will R."/>
            <person name="Williams K."/>
            <person name="Yoo H."/>
            <person name="Bruce D."/>
            <person name="Detter C."/>
            <person name="Munk C."/>
            <person name="Brettin T.S."/>
        </authorList>
    </citation>
    <scope>NUCLEOTIDE SEQUENCE [LARGE SCALE GENOMIC DNA]</scope>
    <source>
        <strain>ATCC 23445 / NCTC 10510</strain>
    </source>
</reference>
<name>RS4_BRUSI</name>
<accession>B0CLF6</accession>
<evidence type="ECO:0000255" key="1">
    <source>
        <dbReference type="HAMAP-Rule" id="MF_01306"/>
    </source>
</evidence>
<evidence type="ECO:0000256" key="2">
    <source>
        <dbReference type="SAM" id="MobiDB-lite"/>
    </source>
</evidence>
<evidence type="ECO:0000305" key="3"/>
<keyword id="KW-0687">Ribonucleoprotein</keyword>
<keyword id="KW-0689">Ribosomal protein</keyword>
<keyword id="KW-0694">RNA-binding</keyword>
<keyword id="KW-0699">rRNA-binding</keyword>
<organism>
    <name type="scientific">Brucella suis (strain ATCC 23445 / NCTC 10510)</name>
    <dbReference type="NCBI Taxonomy" id="470137"/>
    <lineage>
        <taxon>Bacteria</taxon>
        <taxon>Pseudomonadati</taxon>
        <taxon>Pseudomonadota</taxon>
        <taxon>Alphaproteobacteria</taxon>
        <taxon>Hyphomicrobiales</taxon>
        <taxon>Brucellaceae</taxon>
        <taxon>Brucella/Ochrobactrum group</taxon>
        <taxon>Brucella</taxon>
    </lineage>
</organism>
<sequence>MSKRESAKYKIDRRLGENIWGRPKSPVNRREYGPGQHGQRRKGKLSDFGVQLRAKQKLKGFYGDISEKQFRKTYEEAARRKGDTGENLIGLLESRLDAVVYRAKFVPTIFAARQFINHGHVNVNGRRVNIQSYRLKVGDVVEVREKSKQLAIVLEAVQLAERDVPDYIDVDHNKMVATYNRVPGLSDVPYAVQMEPNLVVEFYSR</sequence>